<organism>
    <name type="scientific">Serratia proteamaculans (strain 568)</name>
    <dbReference type="NCBI Taxonomy" id="399741"/>
    <lineage>
        <taxon>Bacteria</taxon>
        <taxon>Pseudomonadati</taxon>
        <taxon>Pseudomonadota</taxon>
        <taxon>Gammaproteobacteria</taxon>
        <taxon>Enterobacterales</taxon>
        <taxon>Yersiniaceae</taxon>
        <taxon>Serratia</taxon>
    </lineage>
</organism>
<dbReference type="EC" id="2.1.1.223" evidence="1"/>
<dbReference type="EMBL" id="CP000826">
    <property type="protein sequence ID" value="ABV42774.1"/>
    <property type="molecule type" value="Genomic_DNA"/>
</dbReference>
<dbReference type="SMR" id="A8GI34"/>
<dbReference type="STRING" id="399741.Spro_3678"/>
<dbReference type="KEGG" id="spe:Spro_3678"/>
<dbReference type="eggNOG" id="COG4123">
    <property type="taxonomic scope" value="Bacteria"/>
</dbReference>
<dbReference type="HOGENOM" id="CLU_061983_0_0_6"/>
<dbReference type="OrthoDB" id="5383291at2"/>
<dbReference type="GO" id="GO:0005737">
    <property type="term" value="C:cytoplasm"/>
    <property type="evidence" value="ECO:0007669"/>
    <property type="project" value="UniProtKB-SubCell"/>
</dbReference>
<dbReference type="GO" id="GO:0003676">
    <property type="term" value="F:nucleic acid binding"/>
    <property type="evidence" value="ECO:0007669"/>
    <property type="project" value="InterPro"/>
</dbReference>
<dbReference type="GO" id="GO:0016430">
    <property type="term" value="F:tRNA (adenine-N6)-methyltransferase activity"/>
    <property type="evidence" value="ECO:0007669"/>
    <property type="project" value="UniProtKB-UniRule"/>
</dbReference>
<dbReference type="GO" id="GO:0032259">
    <property type="term" value="P:methylation"/>
    <property type="evidence" value="ECO:0007669"/>
    <property type="project" value="UniProtKB-KW"/>
</dbReference>
<dbReference type="GO" id="GO:0008033">
    <property type="term" value="P:tRNA processing"/>
    <property type="evidence" value="ECO:0007669"/>
    <property type="project" value="UniProtKB-UniRule"/>
</dbReference>
<dbReference type="CDD" id="cd02440">
    <property type="entry name" value="AdoMet_MTases"/>
    <property type="match status" value="1"/>
</dbReference>
<dbReference type="Gene3D" id="3.40.50.150">
    <property type="entry name" value="Vaccinia Virus protein VP39"/>
    <property type="match status" value="1"/>
</dbReference>
<dbReference type="HAMAP" id="MF_01872">
    <property type="entry name" value="tRNA_methyltr_YfiC"/>
    <property type="match status" value="1"/>
</dbReference>
<dbReference type="InterPro" id="IPR002052">
    <property type="entry name" value="DNA_methylase_N6_adenine_CS"/>
</dbReference>
<dbReference type="InterPro" id="IPR029063">
    <property type="entry name" value="SAM-dependent_MTases_sf"/>
</dbReference>
<dbReference type="InterPro" id="IPR007848">
    <property type="entry name" value="Small_mtfrase_dom"/>
</dbReference>
<dbReference type="InterPro" id="IPR050210">
    <property type="entry name" value="tRNA_Adenine-N(6)_MTase"/>
</dbReference>
<dbReference type="InterPro" id="IPR022882">
    <property type="entry name" value="tRNA_adenine-N6_MeTrfase"/>
</dbReference>
<dbReference type="NCBIfam" id="NF047853">
    <property type="entry name" value="tRm6a37MtseTrmN"/>
    <property type="match status" value="1"/>
</dbReference>
<dbReference type="PANTHER" id="PTHR47739">
    <property type="entry name" value="TRNA1(VAL) (ADENINE(37)-N6)-METHYLTRANSFERASE"/>
    <property type="match status" value="1"/>
</dbReference>
<dbReference type="PANTHER" id="PTHR47739:SF1">
    <property type="entry name" value="TRNA1(VAL) (ADENINE(37)-N6)-METHYLTRANSFERASE"/>
    <property type="match status" value="1"/>
</dbReference>
<dbReference type="Pfam" id="PF05175">
    <property type="entry name" value="MTS"/>
    <property type="match status" value="1"/>
</dbReference>
<dbReference type="SUPFAM" id="SSF53335">
    <property type="entry name" value="S-adenosyl-L-methionine-dependent methyltransferases"/>
    <property type="match status" value="1"/>
</dbReference>
<dbReference type="PROSITE" id="PS00092">
    <property type="entry name" value="N6_MTASE"/>
    <property type="match status" value="1"/>
</dbReference>
<keyword id="KW-0963">Cytoplasm</keyword>
<keyword id="KW-0489">Methyltransferase</keyword>
<keyword id="KW-0949">S-adenosyl-L-methionine</keyword>
<keyword id="KW-0808">Transferase</keyword>
<keyword id="KW-0819">tRNA processing</keyword>
<feature type="chain" id="PRO_0000387413" description="tRNA1(Val) (adenine(37)-N6)-methyltransferase">
    <location>
        <begin position="1"/>
        <end position="260"/>
    </location>
</feature>
<proteinExistence type="inferred from homology"/>
<comment type="function">
    <text evidence="1">Specifically methylates the adenine in position 37 of tRNA(1)(Val) (anticodon cmo5UAC).</text>
</comment>
<comment type="catalytic activity">
    <reaction evidence="1">
        <text>adenosine(37) in tRNA1(Val) + S-adenosyl-L-methionine = N(6)-methyladenosine(37) in tRNA1(Val) + S-adenosyl-L-homocysteine + H(+)</text>
        <dbReference type="Rhea" id="RHEA:43160"/>
        <dbReference type="Rhea" id="RHEA-COMP:10369"/>
        <dbReference type="Rhea" id="RHEA-COMP:10370"/>
        <dbReference type="ChEBI" id="CHEBI:15378"/>
        <dbReference type="ChEBI" id="CHEBI:57856"/>
        <dbReference type="ChEBI" id="CHEBI:59789"/>
        <dbReference type="ChEBI" id="CHEBI:74411"/>
        <dbReference type="ChEBI" id="CHEBI:74449"/>
        <dbReference type="EC" id="2.1.1.223"/>
    </reaction>
</comment>
<comment type="subcellular location">
    <subcellularLocation>
        <location evidence="1">Cytoplasm</location>
    </subcellularLocation>
</comment>
<comment type="similarity">
    <text evidence="1">Belongs to the methyltransferase superfamily. tRNA (adenine-N(6)-)-methyltransferase family.</text>
</comment>
<accession>A8GI34</accession>
<reference key="1">
    <citation type="submission" date="2007-09" db="EMBL/GenBank/DDBJ databases">
        <title>Complete sequence of chromosome of Serratia proteamaculans 568.</title>
        <authorList>
            <consortium name="US DOE Joint Genome Institute"/>
            <person name="Copeland A."/>
            <person name="Lucas S."/>
            <person name="Lapidus A."/>
            <person name="Barry K."/>
            <person name="Glavina del Rio T."/>
            <person name="Dalin E."/>
            <person name="Tice H."/>
            <person name="Pitluck S."/>
            <person name="Chain P."/>
            <person name="Malfatti S."/>
            <person name="Shin M."/>
            <person name="Vergez L."/>
            <person name="Schmutz J."/>
            <person name="Larimer F."/>
            <person name="Land M."/>
            <person name="Hauser L."/>
            <person name="Kyrpides N."/>
            <person name="Kim E."/>
            <person name="Taghavi S."/>
            <person name="Newman L."/>
            <person name="Vangronsveld J."/>
            <person name="van der Lelie D."/>
            <person name="Richardson P."/>
        </authorList>
    </citation>
    <scope>NUCLEOTIDE SEQUENCE [LARGE SCALE GENOMIC DNA]</scope>
    <source>
        <strain>568</strain>
    </source>
</reference>
<evidence type="ECO:0000255" key="1">
    <source>
        <dbReference type="HAMAP-Rule" id="MF_01872"/>
    </source>
</evidence>
<name>TRMN6_SERP5</name>
<gene>
    <name type="ordered locus">Spro_3678</name>
</gene>
<sequence length="260" mass="29041">MLRQFCIQVVIVSTQSKANFTPRRGGFTFKQFFVAHDRCAMKVGTDGVLLGAWAPLAQAQRVLDIGSGSGLIALMLAQRTAENVQIDAVELDEAAAAQAHDNVLESPWSLRIQVHAQDIHHFAQHHAGQYDLIVSNPPYFEPAVACRDQARHNARYTETLTHDALLASAEQLIVPQGTFCVVLPHDIGEAFETNAHRRGWHTAQRLNVSDRADTPMHRVLLALTRQPAEEATEQKLAIKLADGSYTDDFRRLITDFYLFY</sequence>
<protein>
    <recommendedName>
        <fullName evidence="1">tRNA1(Val) (adenine(37)-N6)-methyltransferase</fullName>
        <ecNumber evidence="1">2.1.1.223</ecNumber>
    </recommendedName>
    <alternativeName>
        <fullName evidence="1">tRNA m6A37 methyltransferase</fullName>
    </alternativeName>
</protein>